<gene>
    <name type="primary">END3</name>
    <name type="ordered locus">AER416C</name>
</gene>
<comment type="function">
    <text evidence="1">Component of the PAN1 actin cytoskeleton-regulatory complex required for the internalization of endosomes during actin-coupled endocytosis. The complex links the site of endocytosis to the cell membrane-associated actin cytoskeleton. Mediates uptake of external molecules and vacuolar degradation of plasma membrane proteins. Plays a role in the proper organization of the cell membrane-associated actin cytoskeleton and promotes its destabilization (By similarity).</text>
</comment>
<comment type="subunit">
    <text evidence="1">Component of the PAN1 actin cytoskeleton-regulatory complex.</text>
</comment>
<comment type="subcellular location">
    <subcellularLocation>
        <location evidence="1">Cell membrane</location>
        <topology evidence="1">Peripheral membrane protein</topology>
        <orientation evidence="1">Cytoplasmic side</orientation>
    </subcellularLocation>
    <subcellularLocation>
        <location evidence="1">Endosome membrane</location>
        <topology evidence="1">Peripheral membrane protein</topology>
        <orientation evidence="1">Cytoplasmic side</orientation>
    </subcellularLocation>
    <subcellularLocation>
        <location evidence="1">Cytoplasm</location>
        <location evidence="1">Cytoskeleton</location>
        <location evidence="1">Actin patch</location>
    </subcellularLocation>
    <text evidence="1">Cytoplasmic and cortical actin patches.</text>
</comment>
<comment type="similarity">
    <text evidence="6">Belongs to the END3 family.</text>
</comment>
<proteinExistence type="inferred from homology"/>
<protein>
    <recommendedName>
        <fullName>Actin cytoskeleton-regulatory complex protein END3</fullName>
    </recommendedName>
    <alternativeName>
        <fullName>Endocytosis protein 3</fullName>
    </alternativeName>
</protein>
<name>END3_EREGS</name>
<feature type="chain" id="PRO_0000349435" description="Actin cytoskeleton-regulatory complex protein END3">
    <location>
        <begin position="1"/>
        <end position="372"/>
    </location>
</feature>
<feature type="domain" description="EH 1" evidence="3">
    <location>
        <begin position="8"/>
        <end position="98"/>
    </location>
</feature>
<feature type="domain" description="EF-hand" evidence="4">
    <location>
        <begin position="40"/>
        <end position="75"/>
    </location>
</feature>
<feature type="domain" description="EH 2" evidence="3">
    <location>
        <begin position="133"/>
        <end position="225"/>
    </location>
</feature>
<feature type="region of interest" description="Disordered" evidence="5">
    <location>
        <begin position="242"/>
        <end position="267"/>
    </location>
</feature>
<feature type="coiled-coil region" evidence="2">
    <location>
        <begin position="271"/>
        <end position="355"/>
    </location>
</feature>
<feature type="compositionally biased region" description="Polar residues" evidence="5">
    <location>
        <begin position="249"/>
        <end position="267"/>
    </location>
</feature>
<feature type="binding site" evidence="4">
    <location>
        <position position="53"/>
    </location>
    <ligand>
        <name>Ca(2+)</name>
        <dbReference type="ChEBI" id="CHEBI:29108"/>
    </ligand>
</feature>
<feature type="binding site" evidence="4">
    <location>
        <position position="55"/>
    </location>
    <ligand>
        <name>Ca(2+)</name>
        <dbReference type="ChEBI" id="CHEBI:29108"/>
    </ligand>
</feature>
<feature type="binding site" evidence="4">
    <location>
        <position position="57"/>
    </location>
    <ligand>
        <name>Ca(2+)</name>
        <dbReference type="ChEBI" id="CHEBI:29108"/>
    </ligand>
</feature>
<feature type="binding site" evidence="4">
    <location>
        <position position="59"/>
    </location>
    <ligand>
        <name>Ca(2+)</name>
        <dbReference type="ChEBI" id="CHEBI:29108"/>
    </ligand>
</feature>
<feature type="binding site" evidence="4">
    <location>
        <position position="64"/>
    </location>
    <ligand>
        <name>Ca(2+)</name>
        <dbReference type="ChEBI" id="CHEBI:29108"/>
    </ligand>
</feature>
<dbReference type="EMBL" id="AE016818">
    <property type="protein sequence ID" value="AAS53095.2"/>
    <property type="molecule type" value="Genomic_DNA"/>
</dbReference>
<dbReference type="RefSeq" id="NP_985271.2">
    <property type="nucleotide sequence ID" value="NM_210625.2"/>
</dbReference>
<dbReference type="FunCoup" id="Q755V2">
    <property type="interactions" value="144"/>
</dbReference>
<dbReference type="STRING" id="284811.Q755V2"/>
<dbReference type="EnsemblFungi" id="AAS53095">
    <property type="protein sequence ID" value="AAS53095"/>
    <property type="gene ID" value="AGOS_AER416C"/>
</dbReference>
<dbReference type="GeneID" id="4621490"/>
<dbReference type="KEGG" id="ago:AGOS_AER416C"/>
<dbReference type="eggNOG" id="KOG0998">
    <property type="taxonomic scope" value="Eukaryota"/>
</dbReference>
<dbReference type="HOGENOM" id="CLU_040829_0_0_1"/>
<dbReference type="InParanoid" id="Q755V2"/>
<dbReference type="OMA" id="DWLIPES"/>
<dbReference type="OrthoDB" id="1716625at2759"/>
<dbReference type="Proteomes" id="UP000000591">
    <property type="component" value="Chromosome V"/>
</dbReference>
<dbReference type="GO" id="GO:0030479">
    <property type="term" value="C:actin cortical patch"/>
    <property type="evidence" value="ECO:0007669"/>
    <property type="project" value="UniProtKB-SubCell"/>
</dbReference>
<dbReference type="GO" id="GO:1990964">
    <property type="term" value="C:actin cytoskeleton-regulatory complex"/>
    <property type="evidence" value="ECO:0007669"/>
    <property type="project" value="EnsemblFungi"/>
</dbReference>
<dbReference type="GO" id="GO:0005737">
    <property type="term" value="C:cytoplasm"/>
    <property type="evidence" value="ECO:0000318"/>
    <property type="project" value="GO_Central"/>
</dbReference>
<dbReference type="GO" id="GO:0010008">
    <property type="term" value="C:endosome membrane"/>
    <property type="evidence" value="ECO:0007669"/>
    <property type="project" value="UniProtKB-SubCell"/>
</dbReference>
<dbReference type="GO" id="GO:0005886">
    <property type="term" value="C:plasma membrane"/>
    <property type="evidence" value="ECO:0000318"/>
    <property type="project" value="GO_Central"/>
</dbReference>
<dbReference type="GO" id="GO:0003779">
    <property type="term" value="F:actin binding"/>
    <property type="evidence" value="ECO:0007669"/>
    <property type="project" value="UniProtKB-KW"/>
</dbReference>
<dbReference type="GO" id="GO:0005509">
    <property type="term" value="F:calcium ion binding"/>
    <property type="evidence" value="ECO:0007669"/>
    <property type="project" value="InterPro"/>
</dbReference>
<dbReference type="GO" id="GO:0030674">
    <property type="term" value="F:protein-macromolecule adaptor activity"/>
    <property type="evidence" value="ECO:0007669"/>
    <property type="project" value="EnsemblFungi"/>
</dbReference>
<dbReference type="GO" id="GO:0007015">
    <property type="term" value="P:actin filament organization"/>
    <property type="evidence" value="ECO:0007669"/>
    <property type="project" value="InterPro"/>
</dbReference>
<dbReference type="GO" id="GO:0030476">
    <property type="term" value="P:ascospore wall assembly"/>
    <property type="evidence" value="ECO:0007669"/>
    <property type="project" value="EnsemblFungi"/>
</dbReference>
<dbReference type="GO" id="GO:0006897">
    <property type="term" value="P:endocytosis"/>
    <property type="evidence" value="ECO:0000318"/>
    <property type="project" value="GO_Central"/>
</dbReference>
<dbReference type="GO" id="GO:0016197">
    <property type="term" value="P:endosomal transport"/>
    <property type="evidence" value="ECO:0000318"/>
    <property type="project" value="GO_Central"/>
</dbReference>
<dbReference type="GO" id="GO:0061709">
    <property type="term" value="P:reticulophagy"/>
    <property type="evidence" value="ECO:0007669"/>
    <property type="project" value="EnsemblFungi"/>
</dbReference>
<dbReference type="CDD" id="cd00052">
    <property type="entry name" value="EH"/>
    <property type="match status" value="1"/>
</dbReference>
<dbReference type="FunFam" id="1.10.238.10:FF:000323">
    <property type="entry name" value="Actin cytoskeleton-regulatory complex protein end3"/>
    <property type="match status" value="1"/>
</dbReference>
<dbReference type="Gene3D" id="1.10.238.10">
    <property type="entry name" value="EF-hand"/>
    <property type="match status" value="2"/>
</dbReference>
<dbReference type="InterPro" id="IPR011992">
    <property type="entry name" value="EF-hand-dom_pair"/>
</dbReference>
<dbReference type="InterPro" id="IPR018247">
    <property type="entry name" value="EF_Hand_1_Ca_BS"/>
</dbReference>
<dbReference type="InterPro" id="IPR002048">
    <property type="entry name" value="EF_hand_dom"/>
</dbReference>
<dbReference type="InterPro" id="IPR000261">
    <property type="entry name" value="EH_dom"/>
</dbReference>
<dbReference type="InterPro" id="IPR025604">
    <property type="entry name" value="End3"/>
</dbReference>
<dbReference type="PANTHER" id="PTHR11216:SF74">
    <property type="entry name" value="ACTIN CYTOSKELETON-REGULATORY COMPLEX PROTEIN END3"/>
    <property type="match status" value="1"/>
</dbReference>
<dbReference type="PANTHER" id="PTHR11216">
    <property type="entry name" value="EH DOMAIN"/>
    <property type="match status" value="1"/>
</dbReference>
<dbReference type="Pfam" id="PF12763">
    <property type="entry name" value="EH"/>
    <property type="match status" value="1"/>
</dbReference>
<dbReference type="Pfam" id="PF12761">
    <property type="entry name" value="End3"/>
    <property type="match status" value="1"/>
</dbReference>
<dbReference type="SMART" id="SM00054">
    <property type="entry name" value="EFh"/>
    <property type="match status" value="1"/>
</dbReference>
<dbReference type="SMART" id="SM00027">
    <property type="entry name" value="EH"/>
    <property type="match status" value="2"/>
</dbReference>
<dbReference type="SUPFAM" id="SSF47473">
    <property type="entry name" value="EF-hand"/>
    <property type="match status" value="2"/>
</dbReference>
<dbReference type="PROSITE" id="PS00018">
    <property type="entry name" value="EF_HAND_1"/>
    <property type="match status" value="1"/>
</dbReference>
<dbReference type="PROSITE" id="PS50222">
    <property type="entry name" value="EF_HAND_2"/>
    <property type="match status" value="1"/>
</dbReference>
<dbReference type="PROSITE" id="PS50031">
    <property type="entry name" value="EH"/>
    <property type="match status" value="2"/>
</dbReference>
<accession>Q755V2</accession>
<evidence type="ECO:0000250" key="1"/>
<evidence type="ECO:0000255" key="2"/>
<evidence type="ECO:0000255" key="3">
    <source>
        <dbReference type="PROSITE-ProRule" id="PRU00077"/>
    </source>
</evidence>
<evidence type="ECO:0000255" key="4">
    <source>
        <dbReference type="PROSITE-ProRule" id="PRU00448"/>
    </source>
</evidence>
<evidence type="ECO:0000256" key="5">
    <source>
        <dbReference type="SAM" id="MobiDB-lite"/>
    </source>
</evidence>
<evidence type="ECO:0000305" key="6"/>
<keyword id="KW-0009">Actin-binding</keyword>
<keyword id="KW-0106">Calcium</keyword>
<keyword id="KW-1003">Cell membrane</keyword>
<keyword id="KW-0175">Coiled coil</keyword>
<keyword id="KW-0963">Cytoplasm</keyword>
<keyword id="KW-0206">Cytoskeleton</keyword>
<keyword id="KW-0254">Endocytosis</keyword>
<keyword id="KW-0967">Endosome</keyword>
<keyword id="KW-0472">Membrane</keyword>
<keyword id="KW-0479">Metal-binding</keyword>
<keyword id="KW-1185">Reference proteome</keyword>
<keyword id="KW-0677">Repeat</keyword>
<organism>
    <name type="scientific">Eremothecium gossypii (strain ATCC 10895 / CBS 109.51 / FGSC 9923 / NRRL Y-1056)</name>
    <name type="common">Yeast</name>
    <name type="synonym">Ashbya gossypii</name>
    <dbReference type="NCBI Taxonomy" id="284811"/>
    <lineage>
        <taxon>Eukaryota</taxon>
        <taxon>Fungi</taxon>
        <taxon>Dikarya</taxon>
        <taxon>Ascomycota</taxon>
        <taxon>Saccharomycotina</taxon>
        <taxon>Saccharomycetes</taxon>
        <taxon>Saccharomycetales</taxon>
        <taxon>Saccharomycetaceae</taxon>
        <taxon>Eremothecium</taxon>
    </lineage>
</organism>
<reference key="1">
    <citation type="journal article" date="2004" name="Science">
        <title>The Ashbya gossypii genome as a tool for mapping the ancient Saccharomyces cerevisiae genome.</title>
        <authorList>
            <person name="Dietrich F.S."/>
            <person name="Voegeli S."/>
            <person name="Brachat S."/>
            <person name="Lerch A."/>
            <person name="Gates K."/>
            <person name="Steiner S."/>
            <person name="Mohr C."/>
            <person name="Poehlmann R."/>
            <person name="Luedi P."/>
            <person name="Choi S."/>
            <person name="Wing R.A."/>
            <person name="Flavier A."/>
            <person name="Gaffney T.D."/>
            <person name="Philippsen P."/>
        </authorList>
    </citation>
    <scope>NUCLEOTIDE SEQUENCE [LARGE SCALE GENOMIC DNA]</scope>
    <source>
        <strain>ATCC 10895 / CBS 109.51 / FGSC 9923 / NRRL Y-1056</strain>
    </source>
</reference>
<reference key="2">
    <citation type="journal article" date="2013" name="G3 (Bethesda)">
        <title>Genomes of Ashbya fungi isolated from insects reveal four mating-type loci, numerous translocations, lack of transposons, and distinct gene duplications.</title>
        <authorList>
            <person name="Dietrich F.S."/>
            <person name="Voegeli S."/>
            <person name="Kuo S."/>
            <person name="Philippsen P."/>
        </authorList>
    </citation>
    <scope>GENOME REANNOTATION</scope>
    <scope>SEQUENCE REVISION TO 110</scope>
    <source>
        <strain>ATCC 10895 / CBS 109.51 / FGSC 9923 / NRRL Y-1056</strain>
    </source>
</reference>
<sequence length="372" mass="41364">MPKLEQFEIKKYWQIFSGLSPSDNKVTHDQVAPILHNSKLEAGVLGKIWFLSDIDGDGNLDFEEFVICMRLIFDMVNQNITAVPDELPDWLVPGSKVELVRQRASQGGVAAASAAPASAGEAPEMEWYMSPEDRALYERLYQKCQTATDGSVGYQGVKPVVTEHFQKITQPELEQVWALVNPKGFAAIDRDPVMYLFHLLRQRSDVGAKIPAGVPASLGETFAKERVTTDIANEGQGAIRKSELHIASASRSNSARPKNENSDYSATAGTDWEVVQLQRELAALDSQLSDLKQQQESAPPTRAEVLREQFEGLLKFKQAQLSTSTNSSPAMNVLSLTEDIDSLEEQVTVLQHYLSTRSETLQQLQWEIQSLK</sequence>